<comment type="function">
    <text evidence="2">Transcription factor; part of the gene cluster that mediates the biosynthesis of meroterpenoids.</text>
</comment>
<comment type="subcellular location">
    <subcellularLocation>
        <location evidence="4">Nucleus</location>
    </subcellularLocation>
</comment>
<comment type="similarity">
    <text evidence="4">Belongs to the TRI10 transcription regulator family.</text>
</comment>
<evidence type="ECO:0000256" key="1">
    <source>
        <dbReference type="SAM" id="MobiDB-lite"/>
    </source>
</evidence>
<evidence type="ECO:0000269" key="2">
    <source>
    </source>
</evidence>
<evidence type="ECO:0000303" key="3">
    <source>
    </source>
</evidence>
<evidence type="ECO:0000305" key="4"/>
<protein>
    <recommendedName>
        <fullName evidence="3">Transcription factor ntnD</fullName>
    </recommendedName>
    <alternativeName>
        <fullName evidence="3">Nectripenoid biosynthesis cluster protein D</fullName>
    </alternativeName>
</protein>
<dbReference type="EMBL" id="MH182998">
    <property type="protein sequence ID" value="AYO60865.1"/>
    <property type="molecule type" value="mRNA"/>
</dbReference>
<dbReference type="SMR" id="A0A455LLW5"/>
<dbReference type="GO" id="GO:0005634">
    <property type="term" value="C:nucleus"/>
    <property type="evidence" value="ECO:0007669"/>
    <property type="project" value="UniProtKB-SubCell"/>
</dbReference>
<dbReference type="GO" id="GO:0003700">
    <property type="term" value="F:DNA-binding transcription factor activity"/>
    <property type="evidence" value="ECO:0007669"/>
    <property type="project" value="TreeGrafter"/>
</dbReference>
<dbReference type="GO" id="GO:0046872">
    <property type="term" value="F:metal ion binding"/>
    <property type="evidence" value="ECO:0007669"/>
    <property type="project" value="UniProtKB-KW"/>
</dbReference>
<dbReference type="GO" id="GO:0000976">
    <property type="term" value="F:transcription cis-regulatory region binding"/>
    <property type="evidence" value="ECO:0007669"/>
    <property type="project" value="TreeGrafter"/>
</dbReference>
<dbReference type="GO" id="GO:0045944">
    <property type="term" value="P:positive regulation of transcription by RNA polymerase II"/>
    <property type="evidence" value="ECO:0007669"/>
    <property type="project" value="TreeGrafter"/>
</dbReference>
<dbReference type="InterPro" id="IPR021858">
    <property type="entry name" value="Fun_TF"/>
</dbReference>
<dbReference type="PANTHER" id="PTHR37534:SF26">
    <property type="entry name" value="TRANSCRIPTION FACTOR, PUTATIVE-RELATED"/>
    <property type="match status" value="1"/>
</dbReference>
<dbReference type="PANTHER" id="PTHR37534">
    <property type="entry name" value="TRANSCRIPTIONAL ACTIVATOR PROTEIN UGA3"/>
    <property type="match status" value="1"/>
</dbReference>
<dbReference type="Pfam" id="PF11951">
    <property type="entry name" value="Fungal_trans_2"/>
    <property type="match status" value="1"/>
</dbReference>
<organism>
    <name type="scientific">Nectria sp</name>
    <dbReference type="NCBI Taxonomy" id="1755444"/>
    <lineage>
        <taxon>Eukaryota</taxon>
        <taxon>Fungi</taxon>
        <taxon>Dikarya</taxon>
        <taxon>Ascomycota</taxon>
        <taxon>Pezizomycotina</taxon>
        <taxon>Sordariomycetes</taxon>
        <taxon>Hypocreomycetidae</taxon>
        <taxon>Hypocreales</taxon>
        <taxon>Nectriaceae</taxon>
        <taxon>Nectria</taxon>
    </lineage>
</organism>
<feature type="chain" id="PRO_0000452564" description="Transcription factor ntnD">
    <location>
        <begin position="1" status="less than"/>
        <end position="609"/>
    </location>
</feature>
<feature type="DNA-binding region" description="Zn(2)-C6 fungal-type" evidence="4">
    <location>
        <begin position="1" status="less than"/>
        <end position="7"/>
    </location>
</feature>
<feature type="region of interest" description="Disordered" evidence="1">
    <location>
        <begin position="46"/>
        <end position="104"/>
    </location>
</feature>
<feature type="compositionally biased region" description="Polar residues" evidence="1">
    <location>
        <begin position="51"/>
        <end position="84"/>
    </location>
</feature>
<feature type="compositionally biased region" description="Low complexity" evidence="1">
    <location>
        <begin position="85"/>
        <end position="97"/>
    </location>
</feature>
<feature type="non-terminal residue" evidence="4">
    <location>
        <position position="1"/>
    </location>
</feature>
<reference key="1">
    <citation type="journal article" date="2018" name="Angew. Chem. Int. Ed.">
        <title>Genome mining and comparative biosynthesis of meroterpenoids from two phylogenetically distinct fungi.</title>
        <authorList>
            <person name="Zhang X."/>
            <person name="Wang T.T."/>
            <person name="Xu Q.L."/>
            <person name="Xiong Y."/>
            <person name="Zhang L."/>
            <person name="Han H."/>
            <person name="Xu K."/>
            <person name="Guo W.J."/>
            <person name="Xu Q."/>
            <person name="Tan R.X."/>
            <person name="Ge H.M."/>
        </authorList>
    </citation>
    <scope>NUCLEOTIDE SEQUENCE [MRNA]</scope>
    <scope>FUNCTION</scope>
    <scope>PATHWAY</scope>
    <source>
        <strain>Z14-w</strain>
    </source>
</reference>
<keyword id="KW-0238">DNA-binding</keyword>
<keyword id="KW-0479">Metal-binding</keyword>
<keyword id="KW-0539">Nucleus</keyword>
<keyword id="KW-0804">Transcription</keyword>
<keyword id="KW-0805">Transcription regulation</keyword>
<keyword id="KW-0862">Zinc</keyword>
<proteinExistence type="evidence at transcript level"/>
<name>NTND_NECSZ</name>
<accession>A0A455LLW5</accession>
<sequence length="609" mass="69113">MCVGIECHGFGDKPAWMDRGARQKAEAAKMKQKVTQVARNRRMNQFRDQNESSLNRIHNRRTSNSQPSTRSINNTTTIPASNNEPLALSQPPSASSQNQVEKDQLSTYHQDSINVAIDPLDTIDSSLPDFQTVFDEINFLTDQTFDLPEIDWTSTNNVPITDNTANMGVTNGLRAGQYVPRSQKQIDMDFSPRDSPSMLTISDVEDAALLAYYVSKVFHWQFRFCSSTMSGFNQGYFIWLMSKSRPLYLASLALSSSYRSFQNNAKEPQPCLKYEEHMQRYDIATEELQGHLKGHTPMNDVTMLACIVSFISSSFLHSGRIDGNVHLKAGVSLIAPRISRQQSGTLSDVHKTPEESSRDFLTGSIIRFDILSAITRDTVPSLSDSYRRILRSSSPSILLETVSGCQNWVFDILLDVYALRDWKRNTRAVGLLSLWELTAKANMIKSDLERRITSNLMLMNESKQEVKTQEDENLQSRHYKHEICVVTHTFACAVSILLEVIVSGAYPQVPEIKQKVGRALESFAYIEDPDILEVLTWPLFVVGCVVEEDHHECFRQLLSSTQLVRSIGLYGLKEILEKCWKSRETGEIKDESFDFSHFHTYKSREILIA</sequence>
<gene>
    <name evidence="3" type="primary">ntnD</name>
</gene>